<sequence length="510" mass="52942">MTMSRSSRSSVLALALATGSLVAAGPCDIYSSGGTPCIAAHSTTRALYSSYNGPLYQVQRASDGTTTTITPLSAGGVADASAQDAFCENTTCLITIIYDQSGNGNDLTQAPPGGFNGPDVGGYDNLAGAIGAPVTLNGKKAYGVFVSPGTGYRNNEAIGTATGDEPEGMYAVLDGTHYNDGCCFDYGNAETSSLDTGNGHMEAIYYGTNTAWGYGAGNGPWIMADLENGLFSGQSSDYNAGDPSISYRFVTAILKGGPNLWALRGGNAASGSLSTYYNGIRPTDASGYNPMSKEGAIILGIGGDNSVSAQGTFYEGAMTDGYPDDATENSVQADIVAAKYATTSLISGPALTVGDTVSLKVTTSGYDTRYIAHTGSTINTQVVSSSSSSTLKQQASWTVRTGLASTAAANGCVSFESVDTPGSYIRHSNFALLLNANDGTKLFSEDATFCPQDSFNDDGTNSIRSWNYPTRYWRHYENVLYVASNGGVNTFDAATAFTDDVSWVVADGFA</sequence>
<evidence type="ECO:0000250" key="1"/>
<evidence type="ECO:0000250" key="2">
    <source>
        <dbReference type="UniProtKB" id="Q8NK89"/>
    </source>
</evidence>
<evidence type="ECO:0000255" key="3"/>
<evidence type="ECO:0000269" key="4">
    <source>
    </source>
</evidence>
<evidence type="ECO:0000269" key="5">
    <source>
    </source>
</evidence>
<evidence type="ECO:0000305" key="6"/>
<protein>
    <recommendedName>
        <fullName>Alpha-L-arabinofuranosidase B</fullName>
        <shortName>ABF B</shortName>
        <shortName>Arabinosidase B</shortName>
        <ecNumber>3.2.1.55</ecNumber>
    </recommendedName>
</protein>
<comment type="function">
    <text evidence="4 5">Alpha-L-arabinofuranosidase involved in the degradation of arabinoxylan, a major component of plant hemicellulose. Able to hydrolyze 1,5-, 1,3- and 1,2-alpha-linkages not only in L-arabinofuranosyl oligosaccharides, but also in polysaccharides containing terminal non-reducing L-arabinofuranoses in side chains, like L-arabinan, arabinogalactan and arabinoxylan.</text>
</comment>
<comment type="catalytic activity">
    <reaction>
        <text>Hydrolysis of terminal non-reducing alpha-L-arabinofuranoside residues in alpha-L-arabinosides.</text>
        <dbReference type="EC" id="3.2.1.55"/>
    </reaction>
</comment>
<comment type="biophysicochemical properties">
    <phDependence>
        <text evidence="5">Optimum pH is 4.8.</text>
    </phDependence>
    <temperatureDependence>
        <text evidence="5">Optimum temperature is 65 degrees Celsius.</text>
    </temperatureDependence>
</comment>
<comment type="pathway">
    <text>Glycan metabolism; L-arabinan degradation.</text>
</comment>
<comment type="subcellular location">
    <subcellularLocation>
        <location evidence="4">Secreted</location>
    </subcellularLocation>
</comment>
<comment type="induction">
    <text evidence="4">Expressed in presence of L-arabinol and repressed in presence of glucose and glycerol. Expression is also pH regulated probably through the action of the pacC transcription factor and is higher at acidic pHs.</text>
</comment>
<comment type="domain">
    <text evidence="1">Organized into two domains: an N-terminal catalytic domain and a C-terminal arabinose-binding domain (ABD).</text>
</comment>
<comment type="similarity">
    <text evidence="6">Belongs to the glycosyl hydrolase 54 family.</text>
</comment>
<proteinExistence type="evidence at protein level"/>
<reference key="1">
    <citation type="journal article" date="1999" name="Microbiology">
        <title>The abfB gene encoding the major alpha-L-arabinofuranosidase of Aspergillus nidulans: nucleotide sequence, regulation and construction of a disrupted strain.</title>
        <authorList>
            <person name="Gielkens M."/>
            <person name="Gonzalez-Candelas L."/>
            <person name="Sanchez-Torres P."/>
            <person name="van de Vondervoort P."/>
            <person name="de Graaff L."/>
            <person name="Visser J."/>
            <person name="Ramon D."/>
        </authorList>
    </citation>
    <scope>NUCLEOTIDE SEQUENCE [GENOMIC DNA]</scope>
    <scope>INDUCTION</scope>
    <scope>SUBCELLULAR LOCATION</scope>
    <scope>FUNCTION</scope>
    <source>
        <strain>ArgB2</strain>
        <strain>biA1</strain>
        <strain>MetG1</strain>
    </source>
</reference>
<reference key="2">
    <citation type="journal article" date="2005" name="Nature">
        <title>Sequencing of Aspergillus nidulans and comparative analysis with A. fumigatus and A. oryzae.</title>
        <authorList>
            <person name="Galagan J.E."/>
            <person name="Calvo S.E."/>
            <person name="Cuomo C."/>
            <person name="Ma L.-J."/>
            <person name="Wortman J.R."/>
            <person name="Batzoglou S."/>
            <person name="Lee S.-I."/>
            <person name="Bastuerkmen M."/>
            <person name="Spevak C.C."/>
            <person name="Clutterbuck J."/>
            <person name="Kapitonov V."/>
            <person name="Jurka J."/>
            <person name="Scazzocchio C."/>
            <person name="Farman M.L."/>
            <person name="Butler J."/>
            <person name="Purcell S."/>
            <person name="Harris S."/>
            <person name="Braus G.H."/>
            <person name="Draht O."/>
            <person name="Busch S."/>
            <person name="D'Enfert C."/>
            <person name="Bouchier C."/>
            <person name="Goldman G.H."/>
            <person name="Bell-Pedersen D."/>
            <person name="Griffiths-Jones S."/>
            <person name="Doonan J.H."/>
            <person name="Yu J."/>
            <person name="Vienken K."/>
            <person name="Pain A."/>
            <person name="Freitag M."/>
            <person name="Selker E.U."/>
            <person name="Archer D.B."/>
            <person name="Penalva M.A."/>
            <person name="Oakley B.R."/>
            <person name="Momany M."/>
            <person name="Tanaka T."/>
            <person name="Kumagai T."/>
            <person name="Asai K."/>
            <person name="Machida M."/>
            <person name="Nierman W.C."/>
            <person name="Denning D.W."/>
            <person name="Caddick M.X."/>
            <person name="Hynes M."/>
            <person name="Paoletti M."/>
            <person name="Fischer R."/>
            <person name="Miller B.L."/>
            <person name="Dyer P.S."/>
            <person name="Sachs M.S."/>
            <person name="Osmani S.A."/>
            <person name="Birren B.W."/>
        </authorList>
    </citation>
    <scope>NUCLEOTIDE SEQUENCE [LARGE SCALE GENOMIC DNA]</scope>
    <source>
        <strain>FGSC A4 / ATCC 38163 / CBS 112.46 / NRRL 194 / M139</strain>
    </source>
</reference>
<reference key="3">
    <citation type="journal article" date="2009" name="Fungal Genet. Biol.">
        <title>The 2008 update of the Aspergillus nidulans genome annotation: a community effort.</title>
        <authorList>
            <person name="Wortman J.R."/>
            <person name="Gilsenan J.M."/>
            <person name="Joardar V."/>
            <person name="Deegan J."/>
            <person name="Clutterbuck J."/>
            <person name="Andersen M.R."/>
            <person name="Archer D."/>
            <person name="Bencina M."/>
            <person name="Braus G."/>
            <person name="Coutinho P."/>
            <person name="von Dohren H."/>
            <person name="Doonan J."/>
            <person name="Driessen A.J."/>
            <person name="Durek P."/>
            <person name="Espeso E."/>
            <person name="Fekete E."/>
            <person name="Flipphi M."/>
            <person name="Estrada C.G."/>
            <person name="Geysens S."/>
            <person name="Goldman G."/>
            <person name="de Groot P.W."/>
            <person name="Hansen K."/>
            <person name="Harris S.D."/>
            <person name="Heinekamp T."/>
            <person name="Helmstaedt K."/>
            <person name="Henrissat B."/>
            <person name="Hofmann G."/>
            <person name="Homan T."/>
            <person name="Horio T."/>
            <person name="Horiuchi H."/>
            <person name="James S."/>
            <person name="Jones M."/>
            <person name="Karaffa L."/>
            <person name="Karanyi Z."/>
            <person name="Kato M."/>
            <person name="Keller N."/>
            <person name="Kelly D.E."/>
            <person name="Kiel J.A."/>
            <person name="Kim J.M."/>
            <person name="van der Klei I.J."/>
            <person name="Klis F.M."/>
            <person name="Kovalchuk A."/>
            <person name="Krasevec N."/>
            <person name="Kubicek C.P."/>
            <person name="Liu B."/>
            <person name="Maccabe A."/>
            <person name="Meyer V."/>
            <person name="Mirabito P."/>
            <person name="Miskei M."/>
            <person name="Mos M."/>
            <person name="Mullins J."/>
            <person name="Nelson D.R."/>
            <person name="Nielsen J."/>
            <person name="Oakley B.R."/>
            <person name="Osmani S.A."/>
            <person name="Pakula T."/>
            <person name="Paszewski A."/>
            <person name="Paulsen I."/>
            <person name="Pilsyk S."/>
            <person name="Pocsi I."/>
            <person name="Punt P.J."/>
            <person name="Ram A.F."/>
            <person name="Ren Q."/>
            <person name="Robellet X."/>
            <person name="Robson G."/>
            <person name="Seiboth B."/>
            <person name="van Solingen P."/>
            <person name="Specht T."/>
            <person name="Sun J."/>
            <person name="Taheri-Talesh N."/>
            <person name="Takeshita N."/>
            <person name="Ussery D."/>
            <person name="vanKuyk P.A."/>
            <person name="Visser H."/>
            <person name="van de Vondervoort P.J."/>
            <person name="de Vries R.P."/>
            <person name="Walton J."/>
            <person name="Xiang X."/>
            <person name="Xiong Y."/>
            <person name="Zeng A.P."/>
            <person name="Brandt B.W."/>
            <person name="Cornell M.J."/>
            <person name="van den Hondel C.A."/>
            <person name="Visser J."/>
            <person name="Oliver S.G."/>
            <person name="Turner G."/>
        </authorList>
    </citation>
    <scope>GENOME REANNOTATION</scope>
    <source>
        <strain>FGSC A4 / ATCC 38163 / CBS 112.46 / NRRL 194 / M139</strain>
    </source>
</reference>
<reference key="4">
    <citation type="journal article" date="2006" name="Proc. Natl. Acad. Sci. U.S.A.">
        <title>Development and application of a suite of polysaccharide-degrading enzymes for analyzing plant cell walls.</title>
        <authorList>
            <person name="Bauer S."/>
            <person name="Vasu P."/>
            <person name="Persson S."/>
            <person name="Mort A.J."/>
            <person name="Somerville C.R."/>
        </authorList>
    </citation>
    <scope>FUNCTION</scope>
    <scope>BIOPHYSICOCHEMICAL PROPERTIES</scope>
</reference>
<accession>O74288</accession>
<accession>C8VN12</accession>
<accession>Q5BD09</accession>
<name>ABFB_EMENI</name>
<organism>
    <name type="scientific">Emericella nidulans (strain FGSC A4 / ATCC 38163 / CBS 112.46 / NRRL 194 / M139)</name>
    <name type="common">Aspergillus nidulans</name>
    <dbReference type="NCBI Taxonomy" id="227321"/>
    <lineage>
        <taxon>Eukaryota</taxon>
        <taxon>Fungi</taxon>
        <taxon>Dikarya</taxon>
        <taxon>Ascomycota</taxon>
        <taxon>Pezizomycotina</taxon>
        <taxon>Eurotiomycetes</taxon>
        <taxon>Eurotiomycetidae</taxon>
        <taxon>Eurotiales</taxon>
        <taxon>Aspergillaceae</taxon>
        <taxon>Aspergillus</taxon>
        <taxon>Aspergillus subgen. Nidulantes</taxon>
    </lineage>
</organism>
<gene>
    <name type="primary">abfB</name>
    <name type="ORF">AN1571</name>
</gene>
<dbReference type="EC" id="3.2.1.55"/>
<dbReference type="EMBL" id="Y13759">
    <property type="protein sequence ID" value="CAA74084.1"/>
    <property type="molecule type" value="Genomic_DNA"/>
</dbReference>
<dbReference type="EMBL" id="AACD01000025">
    <property type="protein sequence ID" value="EAA64278.1"/>
    <property type="molecule type" value="Genomic_DNA"/>
</dbReference>
<dbReference type="EMBL" id="BN001307">
    <property type="protein sequence ID" value="CBF85134.1"/>
    <property type="molecule type" value="Genomic_DNA"/>
</dbReference>
<dbReference type="RefSeq" id="XP_659175.1">
    <property type="nucleotide sequence ID" value="XM_654083.1"/>
</dbReference>
<dbReference type="SMR" id="O74288"/>
<dbReference type="STRING" id="227321.O74288"/>
<dbReference type="CAZy" id="CBM42">
    <property type="family name" value="Carbohydrate-Binding Module Family 42"/>
</dbReference>
<dbReference type="CAZy" id="GH54">
    <property type="family name" value="Glycoside Hydrolase Family 54"/>
</dbReference>
<dbReference type="GlyCosmos" id="O74288">
    <property type="glycosylation" value="1 site, No reported glycans"/>
</dbReference>
<dbReference type="EnsemblFungi" id="CBF85134">
    <property type="protein sequence ID" value="CBF85134"/>
    <property type="gene ID" value="ANIA_01571"/>
</dbReference>
<dbReference type="KEGG" id="ani:ANIA_01571"/>
<dbReference type="eggNOG" id="ENOG502QS3Q">
    <property type="taxonomic scope" value="Eukaryota"/>
</dbReference>
<dbReference type="HOGENOM" id="CLU_029332_3_0_1"/>
<dbReference type="InParanoid" id="O74288"/>
<dbReference type="OMA" id="WNYPTRY"/>
<dbReference type="OrthoDB" id="157622at2759"/>
<dbReference type="UniPathway" id="UPA00667"/>
<dbReference type="Proteomes" id="UP000000560">
    <property type="component" value="Chromosome VII"/>
</dbReference>
<dbReference type="GO" id="GO:0005576">
    <property type="term" value="C:extracellular region"/>
    <property type="evidence" value="ECO:0000250"/>
    <property type="project" value="UniProtKB"/>
</dbReference>
<dbReference type="GO" id="GO:0046556">
    <property type="term" value="F:alpha-L-arabinofuranosidase activity"/>
    <property type="evidence" value="ECO:0000314"/>
    <property type="project" value="UniProtKB"/>
</dbReference>
<dbReference type="GO" id="GO:0031222">
    <property type="term" value="P:arabinan catabolic process"/>
    <property type="evidence" value="ECO:0007669"/>
    <property type="project" value="UniProtKB-UniPathway"/>
</dbReference>
<dbReference type="GO" id="GO:0019566">
    <property type="term" value="P:arabinose metabolic process"/>
    <property type="evidence" value="ECO:0000314"/>
    <property type="project" value="UniProtKB"/>
</dbReference>
<dbReference type="GO" id="GO:0046373">
    <property type="term" value="P:L-arabinose metabolic process"/>
    <property type="evidence" value="ECO:0007669"/>
    <property type="project" value="InterPro"/>
</dbReference>
<dbReference type="GO" id="GO:0045490">
    <property type="term" value="P:pectin catabolic process"/>
    <property type="evidence" value="ECO:0000314"/>
    <property type="project" value="UniProtKB"/>
</dbReference>
<dbReference type="GO" id="GO:0045493">
    <property type="term" value="P:xylan catabolic process"/>
    <property type="evidence" value="ECO:0007669"/>
    <property type="project" value="UniProtKB-KW"/>
</dbReference>
<dbReference type="CDD" id="cd23399">
    <property type="entry name" value="beta-trefoil_ABD_ABFB"/>
    <property type="match status" value="1"/>
</dbReference>
<dbReference type="FunFam" id="2.60.120.200:FF:000131">
    <property type="entry name" value="Probable alpha-L-arabinofuranosidase B"/>
    <property type="match status" value="1"/>
</dbReference>
<dbReference type="FunFam" id="2.80.10.50:FF:000059">
    <property type="entry name" value="Probable alpha-L-arabinofuranosidase B"/>
    <property type="match status" value="1"/>
</dbReference>
<dbReference type="Gene3D" id="2.60.120.200">
    <property type="match status" value="1"/>
</dbReference>
<dbReference type="Gene3D" id="2.80.10.50">
    <property type="match status" value="1"/>
</dbReference>
<dbReference type="InterPro" id="IPR015289">
    <property type="entry name" value="A-L-arabinofuranosidase_B_cat"/>
</dbReference>
<dbReference type="InterPro" id="IPR038964">
    <property type="entry name" value="ABFB"/>
</dbReference>
<dbReference type="InterPro" id="IPR007934">
    <property type="entry name" value="AbfB_ABD"/>
</dbReference>
<dbReference type="InterPro" id="IPR036195">
    <property type="entry name" value="AbfB_ABD_sf"/>
</dbReference>
<dbReference type="InterPro" id="IPR013320">
    <property type="entry name" value="ConA-like_dom_sf"/>
</dbReference>
<dbReference type="PANTHER" id="PTHR39447">
    <property type="entry name" value="ALPHA-L-ARABINOFURANOSIDASE B"/>
    <property type="match status" value="1"/>
</dbReference>
<dbReference type="PANTHER" id="PTHR39447:SF2">
    <property type="entry name" value="ALPHA-L-ARABINOFURANOSIDASE B"/>
    <property type="match status" value="1"/>
</dbReference>
<dbReference type="Pfam" id="PF05270">
    <property type="entry name" value="AbfB"/>
    <property type="match status" value="1"/>
</dbReference>
<dbReference type="Pfam" id="PF09206">
    <property type="entry name" value="ArabFuran-catal"/>
    <property type="match status" value="1"/>
</dbReference>
<dbReference type="SUPFAM" id="SSF110221">
    <property type="entry name" value="AbfB domain"/>
    <property type="match status" value="1"/>
</dbReference>
<dbReference type="SUPFAM" id="SSF49899">
    <property type="entry name" value="Concanavalin A-like lectins/glucanases"/>
    <property type="match status" value="1"/>
</dbReference>
<keyword id="KW-0119">Carbohydrate metabolism</keyword>
<keyword id="KW-1015">Disulfide bond</keyword>
<keyword id="KW-0325">Glycoprotein</keyword>
<keyword id="KW-0326">Glycosidase</keyword>
<keyword id="KW-0378">Hydrolase</keyword>
<keyword id="KW-0624">Polysaccharide degradation</keyword>
<keyword id="KW-1185">Reference proteome</keyword>
<keyword id="KW-0964">Secreted</keyword>
<keyword id="KW-0732">Signal</keyword>
<keyword id="KW-0858">Xylan degradation</keyword>
<feature type="signal peptide" evidence="3">
    <location>
        <begin position="1"/>
        <end position="24"/>
    </location>
</feature>
<feature type="chain" id="PRO_0000394609" description="Alpha-L-arabinofuranosidase B">
    <location>
        <begin position="25"/>
        <end position="510"/>
    </location>
</feature>
<feature type="region of interest" description="Catalytic" evidence="1">
    <location>
        <begin position="25"/>
        <end position="342"/>
    </location>
</feature>
<feature type="region of interest" description="ABD" evidence="1">
    <location>
        <begin position="343"/>
        <end position="510"/>
    </location>
</feature>
<feature type="active site" description="Nucleophile" evidence="1">
    <location>
        <position position="227"/>
    </location>
</feature>
<feature type="active site" description="Proton donor" evidence="1">
    <location>
        <position position="304"/>
    </location>
</feature>
<feature type="binding site" evidence="2">
    <location>
        <position position="225"/>
    </location>
    <ligand>
        <name>substrate</name>
    </ligand>
</feature>
<feature type="binding site" evidence="2">
    <location>
        <position position="228"/>
    </location>
    <ligand>
        <name>substrate</name>
    </ligand>
</feature>
<feature type="binding site" evidence="2">
    <location>
        <position position="303"/>
    </location>
    <ligand>
        <name>substrate</name>
    </ligand>
</feature>
<feature type="binding site" evidence="2">
    <location>
        <position position="427"/>
    </location>
    <ligand>
        <name>substrate</name>
    </ligand>
</feature>
<feature type="binding site" evidence="2">
    <location>
        <position position="429"/>
    </location>
    <ligand>
        <name>substrate</name>
    </ligand>
</feature>
<feature type="binding site" evidence="2">
    <location>
        <position position="430"/>
    </location>
    <ligand>
        <name>substrate</name>
    </ligand>
</feature>
<feature type="binding site" evidence="2">
    <location>
        <position position="446"/>
    </location>
    <ligand>
        <name>substrate</name>
    </ligand>
</feature>
<feature type="binding site" evidence="2">
    <location>
        <position position="475"/>
    </location>
    <ligand>
        <name>substrate</name>
    </ligand>
</feature>
<feature type="binding site" evidence="2">
    <location>
        <position position="477"/>
    </location>
    <ligand>
        <name>substrate</name>
    </ligand>
</feature>
<feature type="binding site" evidence="2">
    <location>
        <position position="480"/>
    </location>
    <ligand>
        <name>substrate</name>
    </ligand>
</feature>
<feature type="binding site" evidence="2">
    <location>
        <position position="500"/>
    </location>
    <ligand>
        <name>substrate</name>
    </ligand>
</feature>
<feature type="site" description="Cis-peptide bond" evidence="2">
    <location>
        <begin position="182"/>
        <end position="183"/>
    </location>
</feature>
<feature type="glycosylation site" description="N-linked (GlcNAc...) asparagine" evidence="3">
    <location>
        <position position="89"/>
    </location>
</feature>
<feature type="disulfide bond" evidence="2">
    <location>
        <begin position="27"/>
        <end position="37"/>
    </location>
</feature>
<feature type="disulfide bond" evidence="2">
    <location>
        <begin position="87"/>
        <end position="92"/>
    </location>
</feature>
<feature type="disulfide bond" evidence="2">
    <location>
        <begin position="182"/>
        <end position="183"/>
    </location>
</feature>
<feature type="disulfide bond" evidence="2">
    <location>
        <begin position="412"/>
        <end position="450"/>
    </location>
</feature>